<proteinExistence type="inferred from homology"/>
<gene>
    <name evidence="1" type="primary">yaeH</name>
    <name type="ordered locus">SPA0217</name>
</gene>
<sequence>MYDNLKSLGITNPEEIDRYSLRQEANNDILKIYFQKDRGEFFAKSVKFKYPRQRKTVVADGIGQGYKEVQEISPNLRYVIDELDQICQRDRSELDLKRKILDDLRHLESVVANKISEIEADLDKLTRK</sequence>
<dbReference type="EMBL" id="CP000026">
    <property type="protein sequence ID" value="AAV76247.1"/>
    <property type="molecule type" value="Genomic_DNA"/>
</dbReference>
<dbReference type="RefSeq" id="WP_000272193.1">
    <property type="nucleotide sequence ID" value="NC_006511.1"/>
</dbReference>
<dbReference type="SMR" id="Q5PD51"/>
<dbReference type="KEGG" id="spt:SPA0217"/>
<dbReference type="HOGENOM" id="CLU_136774_0_0_6"/>
<dbReference type="Proteomes" id="UP000008185">
    <property type="component" value="Chromosome"/>
</dbReference>
<dbReference type="HAMAP" id="MF_01519">
    <property type="entry name" value="UPF0325"/>
    <property type="match status" value="1"/>
</dbReference>
<dbReference type="InterPro" id="IPR020911">
    <property type="entry name" value="UPF0325"/>
</dbReference>
<dbReference type="NCBIfam" id="NF010213">
    <property type="entry name" value="PRK13677.1"/>
    <property type="match status" value="1"/>
</dbReference>
<dbReference type="Pfam" id="PF11944">
    <property type="entry name" value="DUF3461"/>
    <property type="match status" value="1"/>
</dbReference>
<accession>Q5PD51</accession>
<evidence type="ECO:0000255" key="1">
    <source>
        <dbReference type="HAMAP-Rule" id="MF_01519"/>
    </source>
</evidence>
<reference key="1">
    <citation type="journal article" date="2004" name="Nat. Genet.">
        <title>Comparison of genome degradation in Paratyphi A and Typhi, human-restricted serovars of Salmonella enterica that cause typhoid.</title>
        <authorList>
            <person name="McClelland M."/>
            <person name="Sanderson K.E."/>
            <person name="Clifton S.W."/>
            <person name="Latreille P."/>
            <person name="Porwollik S."/>
            <person name="Sabo A."/>
            <person name="Meyer R."/>
            <person name="Bieri T."/>
            <person name="Ozersky P."/>
            <person name="McLellan M."/>
            <person name="Harkins C.R."/>
            <person name="Wang C."/>
            <person name="Nguyen C."/>
            <person name="Berghoff A."/>
            <person name="Elliott G."/>
            <person name="Kohlberg S."/>
            <person name="Strong C."/>
            <person name="Du F."/>
            <person name="Carter J."/>
            <person name="Kremizki C."/>
            <person name="Layman D."/>
            <person name="Leonard S."/>
            <person name="Sun H."/>
            <person name="Fulton L."/>
            <person name="Nash W."/>
            <person name="Miner T."/>
            <person name="Minx P."/>
            <person name="Delehaunty K."/>
            <person name="Fronick C."/>
            <person name="Magrini V."/>
            <person name="Nhan M."/>
            <person name="Warren W."/>
            <person name="Florea L."/>
            <person name="Spieth J."/>
            <person name="Wilson R.K."/>
        </authorList>
    </citation>
    <scope>NUCLEOTIDE SEQUENCE [LARGE SCALE GENOMIC DNA]</scope>
    <source>
        <strain>ATCC 9150 / SARB42</strain>
    </source>
</reference>
<protein>
    <recommendedName>
        <fullName evidence="1">UPF0325 protein YaeH</fullName>
    </recommendedName>
</protein>
<name>YAEH_SALPA</name>
<organism>
    <name type="scientific">Salmonella paratyphi A (strain ATCC 9150 / SARB42)</name>
    <dbReference type="NCBI Taxonomy" id="295319"/>
    <lineage>
        <taxon>Bacteria</taxon>
        <taxon>Pseudomonadati</taxon>
        <taxon>Pseudomonadota</taxon>
        <taxon>Gammaproteobacteria</taxon>
        <taxon>Enterobacterales</taxon>
        <taxon>Enterobacteriaceae</taxon>
        <taxon>Salmonella</taxon>
    </lineage>
</organism>
<comment type="similarity">
    <text evidence="1">Belongs to the UPF0325 family.</text>
</comment>
<feature type="chain" id="PRO_0000211842" description="UPF0325 protein YaeH">
    <location>
        <begin position="1"/>
        <end position="128"/>
    </location>
</feature>